<accession>Q8RA76</accession>
<protein>
    <recommendedName>
        <fullName evidence="1">4-hydroxy-3-methylbut-2-enyl diphosphate reductase</fullName>
        <shortName evidence="1">HMBPP reductase</shortName>
        <ecNumber evidence="1">1.17.7.4</ecNumber>
    </recommendedName>
</protein>
<reference key="1">
    <citation type="journal article" date="2002" name="Genome Res.">
        <title>A complete sequence of the T. tengcongensis genome.</title>
        <authorList>
            <person name="Bao Q."/>
            <person name="Tian Y."/>
            <person name="Li W."/>
            <person name="Xu Z."/>
            <person name="Xuan Z."/>
            <person name="Hu S."/>
            <person name="Dong W."/>
            <person name="Yang J."/>
            <person name="Chen Y."/>
            <person name="Xue Y."/>
            <person name="Xu Y."/>
            <person name="Lai X."/>
            <person name="Huang L."/>
            <person name="Dong X."/>
            <person name="Ma Y."/>
            <person name="Ling L."/>
            <person name="Tan H."/>
            <person name="Chen R."/>
            <person name="Wang J."/>
            <person name="Yu J."/>
            <person name="Yang H."/>
        </authorList>
    </citation>
    <scope>NUCLEOTIDE SEQUENCE [LARGE SCALE GENOMIC DNA]</scope>
    <source>
        <strain>DSM 15242 / JCM 11007 / NBRC 100824 / MB4</strain>
    </source>
</reference>
<feature type="chain" id="PRO_0000128884" description="4-hydroxy-3-methylbut-2-enyl diphosphate reductase">
    <location>
        <begin position="1"/>
        <end position="288"/>
    </location>
</feature>
<feature type="active site" description="Proton donor" evidence="1">
    <location>
        <position position="129"/>
    </location>
</feature>
<feature type="binding site" evidence="1">
    <location>
        <position position="12"/>
    </location>
    <ligand>
        <name>[4Fe-4S] cluster</name>
        <dbReference type="ChEBI" id="CHEBI:49883"/>
    </ligand>
</feature>
<feature type="binding site" evidence="1">
    <location>
        <position position="42"/>
    </location>
    <ligand>
        <name>(2E)-4-hydroxy-3-methylbut-2-enyl diphosphate</name>
        <dbReference type="ChEBI" id="CHEBI:128753"/>
    </ligand>
</feature>
<feature type="binding site" evidence="1">
    <location>
        <position position="42"/>
    </location>
    <ligand>
        <name>dimethylallyl diphosphate</name>
        <dbReference type="ChEBI" id="CHEBI:57623"/>
    </ligand>
</feature>
<feature type="binding site" evidence="1">
    <location>
        <position position="42"/>
    </location>
    <ligand>
        <name>isopentenyl diphosphate</name>
        <dbReference type="ChEBI" id="CHEBI:128769"/>
    </ligand>
</feature>
<feature type="binding site" evidence="1">
    <location>
        <position position="77"/>
    </location>
    <ligand>
        <name>(2E)-4-hydroxy-3-methylbut-2-enyl diphosphate</name>
        <dbReference type="ChEBI" id="CHEBI:128753"/>
    </ligand>
</feature>
<feature type="binding site" evidence="1">
    <location>
        <position position="77"/>
    </location>
    <ligand>
        <name>dimethylallyl diphosphate</name>
        <dbReference type="ChEBI" id="CHEBI:57623"/>
    </ligand>
</feature>
<feature type="binding site" evidence="1">
    <location>
        <position position="77"/>
    </location>
    <ligand>
        <name>isopentenyl diphosphate</name>
        <dbReference type="ChEBI" id="CHEBI:128769"/>
    </ligand>
</feature>
<feature type="binding site" evidence="1">
    <location>
        <position position="99"/>
    </location>
    <ligand>
        <name>[4Fe-4S] cluster</name>
        <dbReference type="ChEBI" id="CHEBI:49883"/>
    </ligand>
</feature>
<feature type="binding site" evidence="1">
    <location>
        <position position="127"/>
    </location>
    <ligand>
        <name>(2E)-4-hydroxy-3-methylbut-2-enyl diphosphate</name>
        <dbReference type="ChEBI" id="CHEBI:128753"/>
    </ligand>
</feature>
<feature type="binding site" evidence="1">
    <location>
        <position position="127"/>
    </location>
    <ligand>
        <name>dimethylallyl diphosphate</name>
        <dbReference type="ChEBI" id="CHEBI:57623"/>
    </ligand>
</feature>
<feature type="binding site" evidence="1">
    <location>
        <position position="127"/>
    </location>
    <ligand>
        <name>isopentenyl diphosphate</name>
        <dbReference type="ChEBI" id="CHEBI:128769"/>
    </ligand>
</feature>
<feature type="binding site" evidence="1">
    <location>
        <position position="165"/>
    </location>
    <ligand>
        <name>(2E)-4-hydroxy-3-methylbut-2-enyl diphosphate</name>
        <dbReference type="ChEBI" id="CHEBI:128753"/>
    </ligand>
</feature>
<feature type="binding site" evidence="1">
    <location>
        <position position="193"/>
    </location>
    <ligand>
        <name>[4Fe-4S] cluster</name>
        <dbReference type="ChEBI" id="CHEBI:49883"/>
    </ligand>
</feature>
<feature type="binding site" evidence="1">
    <location>
        <position position="221"/>
    </location>
    <ligand>
        <name>(2E)-4-hydroxy-3-methylbut-2-enyl diphosphate</name>
        <dbReference type="ChEBI" id="CHEBI:128753"/>
    </ligand>
</feature>
<feature type="binding site" evidence="1">
    <location>
        <position position="221"/>
    </location>
    <ligand>
        <name>dimethylallyl diphosphate</name>
        <dbReference type="ChEBI" id="CHEBI:57623"/>
    </ligand>
</feature>
<feature type="binding site" evidence="1">
    <location>
        <position position="221"/>
    </location>
    <ligand>
        <name>isopentenyl diphosphate</name>
        <dbReference type="ChEBI" id="CHEBI:128769"/>
    </ligand>
</feature>
<feature type="binding site" evidence="1">
    <location>
        <position position="222"/>
    </location>
    <ligand>
        <name>(2E)-4-hydroxy-3-methylbut-2-enyl diphosphate</name>
        <dbReference type="ChEBI" id="CHEBI:128753"/>
    </ligand>
</feature>
<feature type="binding site" evidence="1">
    <location>
        <position position="222"/>
    </location>
    <ligand>
        <name>dimethylallyl diphosphate</name>
        <dbReference type="ChEBI" id="CHEBI:57623"/>
    </ligand>
</feature>
<feature type="binding site" evidence="1">
    <location>
        <position position="222"/>
    </location>
    <ligand>
        <name>isopentenyl diphosphate</name>
        <dbReference type="ChEBI" id="CHEBI:128769"/>
    </ligand>
</feature>
<feature type="binding site" evidence="1">
    <location>
        <position position="223"/>
    </location>
    <ligand>
        <name>(2E)-4-hydroxy-3-methylbut-2-enyl diphosphate</name>
        <dbReference type="ChEBI" id="CHEBI:128753"/>
    </ligand>
</feature>
<feature type="binding site" evidence="1">
    <location>
        <position position="223"/>
    </location>
    <ligand>
        <name>dimethylallyl diphosphate</name>
        <dbReference type="ChEBI" id="CHEBI:57623"/>
    </ligand>
</feature>
<feature type="binding site" evidence="1">
    <location>
        <position position="223"/>
    </location>
    <ligand>
        <name>isopentenyl diphosphate</name>
        <dbReference type="ChEBI" id="CHEBI:128769"/>
    </ligand>
</feature>
<feature type="binding site" evidence="1">
    <location>
        <position position="265"/>
    </location>
    <ligand>
        <name>(2E)-4-hydroxy-3-methylbut-2-enyl diphosphate</name>
        <dbReference type="ChEBI" id="CHEBI:128753"/>
    </ligand>
</feature>
<feature type="binding site" evidence="1">
    <location>
        <position position="265"/>
    </location>
    <ligand>
        <name>dimethylallyl diphosphate</name>
        <dbReference type="ChEBI" id="CHEBI:57623"/>
    </ligand>
</feature>
<feature type="binding site" evidence="1">
    <location>
        <position position="265"/>
    </location>
    <ligand>
        <name>isopentenyl diphosphate</name>
        <dbReference type="ChEBI" id="CHEBI:128769"/>
    </ligand>
</feature>
<dbReference type="EC" id="1.17.7.4" evidence="1"/>
<dbReference type="EMBL" id="AE008691">
    <property type="protein sequence ID" value="AAM24574.1"/>
    <property type="molecule type" value="Genomic_DNA"/>
</dbReference>
<dbReference type="RefSeq" id="WP_011025647.1">
    <property type="nucleotide sequence ID" value="NC_003869.1"/>
</dbReference>
<dbReference type="SMR" id="Q8RA76"/>
<dbReference type="STRING" id="273068.TTE1352"/>
<dbReference type="KEGG" id="tte:TTE1352"/>
<dbReference type="eggNOG" id="COG0761">
    <property type="taxonomic scope" value="Bacteria"/>
</dbReference>
<dbReference type="HOGENOM" id="CLU_027486_0_1_9"/>
<dbReference type="OrthoDB" id="9804077at2"/>
<dbReference type="UniPathway" id="UPA00056">
    <property type="reaction ID" value="UER00097"/>
</dbReference>
<dbReference type="UniPathway" id="UPA00059">
    <property type="reaction ID" value="UER00105"/>
</dbReference>
<dbReference type="Proteomes" id="UP000000555">
    <property type="component" value="Chromosome"/>
</dbReference>
<dbReference type="GO" id="GO:0051539">
    <property type="term" value="F:4 iron, 4 sulfur cluster binding"/>
    <property type="evidence" value="ECO:0007669"/>
    <property type="project" value="UniProtKB-UniRule"/>
</dbReference>
<dbReference type="GO" id="GO:0051745">
    <property type="term" value="F:4-hydroxy-3-methylbut-2-enyl diphosphate reductase activity"/>
    <property type="evidence" value="ECO:0007669"/>
    <property type="project" value="UniProtKB-UniRule"/>
</dbReference>
<dbReference type="GO" id="GO:0046872">
    <property type="term" value="F:metal ion binding"/>
    <property type="evidence" value="ECO:0007669"/>
    <property type="project" value="UniProtKB-KW"/>
</dbReference>
<dbReference type="GO" id="GO:0050992">
    <property type="term" value="P:dimethylallyl diphosphate biosynthetic process"/>
    <property type="evidence" value="ECO:0007669"/>
    <property type="project" value="UniProtKB-UniRule"/>
</dbReference>
<dbReference type="GO" id="GO:0019288">
    <property type="term" value="P:isopentenyl diphosphate biosynthetic process, methylerythritol 4-phosphate pathway"/>
    <property type="evidence" value="ECO:0007669"/>
    <property type="project" value="UniProtKB-UniRule"/>
</dbReference>
<dbReference type="GO" id="GO:0016114">
    <property type="term" value="P:terpenoid biosynthetic process"/>
    <property type="evidence" value="ECO:0007669"/>
    <property type="project" value="UniProtKB-UniRule"/>
</dbReference>
<dbReference type="CDD" id="cd13944">
    <property type="entry name" value="lytB_ispH"/>
    <property type="match status" value="1"/>
</dbReference>
<dbReference type="Gene3D" id="3.40.50.11270">
    <property type="match status" value="1"/>
</dbReference>
<dbReference type="Gene3D" id="3.40.1010.20">
    <property type="entry name" value="4-hydroxy-3-methylbut-2-enyl diphosphate reductase, catalytic domain"/>
    <property type="match status" value="2"/>
</dbReference>
<dbReference type="HAMAP" id="MF_00191">
    <property type="entry name" value="IspH"/>
    <property type="match status" value="1"/>
</dbReference>
<dbReference type="InterPro" id="IPR003451">
    <property type="entry name" value="LytB/IspH"/>
</dbReference>
<dbReference type="NCBIfam" id="TIGR00216">
    <property type="entry name" value="ispH_lytB"/>
    <property type="match status" value="1"/>
</dbReference>
<dbReference type="NCBIfam" id="NF002187">
    <property type="entry name" value="PRK01045.1-1"/>
    <property type="match status" value="1"/>
</dbReference>
<dbReference type="NCBIfam" id="NF009024">
    <property type="entry name" value="PRK12360.1"/>
    <property type="match status" value="1"/>
</dbReference>
<dbReference type="PANTHER" id="PTHR30426">
    <property type="entry name" value="4-HYDROXY-3-METHYLBUT-2-ENYL DIPHOSPHATE REDUCTASE"/>
    <property type="match status" value="1"/>
</dbReference>
<dbReference type="PANTHER" id="PTHR30426:SF0">
    <property type="entry name" value="4-HYDROXY-3-METHYLBUT-2-ENYL DIPHOSPHATE REDUCTASE"/>
    <property type="match status" value="1"/>
</dbReference>
<dbReference type="Pfam" id="PF02401">
    <property type="entry name" value="LYTB"/>
    <property type="match status" value="1"/>
</dbReference>
<gene>
    <name evidence="1" type="primary">ispH</name>
    <name type="synonym">lytB</name>
    <name type="ordered locus">TTE1352</name>
</gene>
<name>ISPH_CALS4</name>
<sequence length="288" mass="32908">MEILIAEHAGFCFGVKRAIEIAYEELNKQKDTRLYTLGEIIHNPQVVKDLEEKGVRVIEEEELEKLLKGDRLIIRSHGISKKLYEFLEQKGVEIIDVTCPFVKKVQNIVEEYYKKGYDIVIVGDKNHPEVIGVNGWCEDKAYIVNSVEEAENLPFFEKACAVSQTTLIEKHWEDILEVLKSKAKELVYFNTICNATQKRQEAADALSKKVDVMFVIGGKHSSNTQKLRKICEKNCKNTYHIERADEITFEMLKGHDIIGITAGASTPDYVIEEVIEKIKSLKGEDENE</sequence>
<evidence type="ECO:0000255" key="1">
    <source>
        <dbReference type="HAMAP-Rule" id="MF_00191"/>
    </source>
</evidence>
<proteinExistence type="inferred from homology"/>
<keyword id="KW-0004">4Fe-4S</keyword>
<keyword id="KW-0408">Iron</keyword>
<keyword id="KW-0411">Iron-sulfur</keyword>
<keyword id="KW-0414">Isoprene biosynthesis</keyword>
<keyword id="KW-0479">Metal-binding</keyword>
<keyword id="KW-0560">Oxidoreductase</keyword>
<keyword id="KW-1185">Reference proteome</keyword>
<organism>
    <name type="scientific">Caldanaerobacter subterraneus subsp. tengcongensis (strain DSM 15242 / JCM 11007 / NBRC 100824 / MB4)</name>
    <name type="common">Thermoanaerobacter tengcongensis</name>
    <dbReference type="NCBI Taxonomy" id="273068"/>
    <lineage>
        <taxon>Bacteria</taxon>
        <taxon>Bacillati</taxon>
        <taxon>Bacillota</taxon>
        <taxon>Clostridia</taxon>
        <taxon>Thermoanaerobacterales</taxon>
        <taxon>Thermoanaerobacteraceae</taxon>
        <taxon>Caldanaerobacter</taxon>
    </lineage>
</organism>
<comment type="function">
    <text evidence="1">Catalyzes the conversion of 1-hydroxy-2-methyl-2-(E)-butenyl 4-diphosphate (HMBPP) into a mixture of isopentenyl diphosphate (IPP) and dimethylallyl diphosphate (DMAPP). Acts in the terminal step of the DOXP/MEP pathway for isoprenoid precursor biosynthesis.</text>
</comment>
<comment type="catalytic activity">
    <reaction evidence="1">
        <text>isopentenyl diphosphate + 2 oxidized [2Fe-2S]-[ferredoxin] + H2O = (2E)-4-hydroxy-3-methylbut-2-enyl diphosphate + 2 reduced [2Fe-2S]-[ferredoxin] + 2 H(+)</text>
        <dbReference type="Rhea" id="RHEA:24488"/>
        <dbReference type="Rhea" id="RHEA-COMP:10000"/>
        <dbReference type="Rhea" id="RHEA-COMP:10001"/>
        <dbReference type="ChEBI" id="CHEBI:15377"/>
        <dbReference type="ChEBI" id="CHEBI:15378"/>
        <dbReference type="ChEBI" id="CHEBI:33737"/>
        <dbReference type="ChEBI" id="CHEBI:33738"/>
        <dbReference type="ChEBI" id="CHEBI:128753"/>
        <dbReference type="ChEBI" id="CHEBI:128769"/>
        <dbReference type="EC" id="1.17.7.4"/>
    </reaction>
</comment>
<comment type="catalytic activity">
    <reaction evidence="1">
        <text>dimethylallyl diphosphate + 2 oxidized [2Fe-2S]-[ferredoxin] + H2O = (2E)-4-hydroxy-3-methylbut-2-enyl diphosphate + 2 reduced [2Fe-2S]-[ferredoxin] + 2 H(+)</text>
        <dbReference type="Rhea" id="RHEA:24825"/>
        <dbReference type="Rhea" id="RHEA-COMP:10000"/>
        <dbReference type="Rhea" id="RHEA-COMP:10001"/>
        <dbReference type="ChEBI" id="CHEBI:15377"/>
        <dbReference type="ChEBI" id="CHEBI:15378"/>
        <dbReference type="ChEBI" id="CHEBI:33737"/>
        <dbReference type="ChEBI" id="CHEBI:33738"/>
        <dbReference type="ChEBI" id="CHEBI:57623"/>
        <dbReference type="ChEBI" id="CHEBI:128753"/>
        <dbReference type="EC" id="1.17.7.4"/>
    </reaction>
</comment>
<comment type="cofactor">
    <cofactor evidence="1">
        <name>[4Fe-4S] cluster</name>
        <dbReference type="ChEBI" id="CHEBI:49883"/>
    </cofactor>
    <text evidence="1">Binds 1 [4Fe-4S] cluster per subunit.</text>
</comment>
<comment type="pathway">
    <text evidence="1">Isoprenoid biosynthesis; dimethylallyl diphosphate biosynthesis; dimethylallyl diphosphate from (2E)-4-hydroxy-3-methylbutenyl diphosphate: step 1/1.</text>
</comment>
<comment type="pathway">
    <text evidence="1">Isoprenoid biosynthesis; isopentenyl diphosphate biosynthesis via DXP pathway; isopentenyl diphosphate from 1-deoxy-D-xylulose 5-phosphate: step 6/6.</text>
</comment>
<comment type="similarity">
    <text evidence="1">Belongs to the IspH family.</text>
</comment>